<name>RS21_STAAM</name>
<protein>
    <recommendedName>
        <fullName evidence="1">Small ribosomal subunit protein bS21</fullName>
    </recommendedName>
    <alternativeName>
        <fullName evidence="2">30S ribosomal protein S21</fullName>
    </alternativeName>
</protein>
<comment type="similarity">
    <text evidence="1">Belongs to the bacterial ribosomal protein bS21 family.</text>
</comment>
<proteinExistence type="inferred from homology"/>
<sequence length="58" mass="6972">MSKTVVRKNESLEDALRRFKRSVSKSGTIQEVRKREFYEKPSVKRKKKSEAARKRKFK</sequence>
<evidence type="ECO:0000255" key="1">
    <source>
        <dbReference type="HAMAP-Rule" id="MF_00358"/>
    </source>
</evidence>
<evidence type="ECO:0000305" key="2"/>
<gene>
    <name evidence="1" type="primary">rpsU</name>
    <name type="ordered locus">SAV1575</name>
</gene>
<organism>
    <name type="scientific">Staphylococcus aureus (strain Mu50 / ATCC 700699)</name>
    <dbReference type="NCBI Taxonomy" id="158878"/>
    <lineage>
        <taxon>Bacteria</taxon>
        <taxon>Bacillati</taxon>
        <taxon>Bacillota</taxon>
        <taxon>Bacilli</taxon>
        <taxon>Bacillales</taxon>
        <taxon>Staphylococcaceae</taxon>
        <taxon>Staphylococcus</taxon>
    </lineage>
</organism>
<dbReference type="EMBL" id="BA000017">
    <property type="protein sequence ID" value="BAB57737.1"/>
    <property type="molecule type" value="Genomic_DNA"/>
</dbReference>
<dbReference type="RefSeq" id="WP_000048060.1">
    <property type="nucleotide sequence ID" value="NC_002758.2"/>
</dbReference>
<dbReference type="SMR" id="P66520"/>
<dbReference type="GeneID" id="98345946"/>
<dbReference type="KEGG" id="sav:SAV1575"/>
<dbReference type="HOGENOM" id="CLU_159258_3_2_9"/>
<dbReference type="PhylomeDB" id="P66520"/>
<dbReference type="Proteomes" id="UP000002481">
    <property type="component" value="Chromosome"/>
</dbReference>
<dbReference type="GO" id="GO:1990904">
    <property type="term" value="C:ribonucleoprotein complex"/>
    <property type="evidence" value="ECO:0007669"/>
    <property type="project" value="UniProtKB-KW"/>
</dbReference>
<dbReference type="GO" id="GO:0005840">
    <property type="term" value="C:ribosome"/>
    <property type="evidence" value="ECO:0007669"/>
    <property type="project" value="UniProtKB-KW"/>
</dbReference>
<dbReference type="GO" id="GO:0003735">
    <property type="term" value="F:structural constituent of ribosome"/>
    <property type="evidence" value="ECO:0007669"/>
    <property type="project" value="InterPro"/>
</dbReference>
<dbReference type="GO" id="GO:0006412">
    <property type="term" value="P:translation"/>
    <property type="evidence" value="ECO:0007669"/>
    <property type="project" value="UniProtKB-UniRule"/>
</dbReference>
<dbReference type="Gene3D" id="1.20.5.1150">
    <property type="entry name" value="Ribosomal protein S8"/>
    <property type="match status" value="1"/>
</dbReference>
<dbReference type="HAMAP" id="MF_00358">
    <property type="entry name" value="Ribosomal_bS21"/>
    <property type="match status" value="1"/>
</dbReference>
<dbReference type="InterPro" id="IPR001911">
    <property type="entry name" value="Ribosomal_bS21"/>
</dbReference>
<dbReference type="InterPro" id="IPR018278">
    <property type="entry name" value="Ribosomal_bS21_CS"/>
</dbReference>
<dbReference type="InterPro" id="IPR038380">
    <property type="entry name" value="Ribosomal_bS21_sf"/>
</dbReference>
<dbReference type="NCBIfam" id="TIGR00030">
    <property type="entry name" value="S21p"/>
    <property type="match status" value="1"/>
</dbReference>
<dbReference type="PANTHER" id="PTHR21109">
    <property type="entry name" value="MITOCHONDRIAL 28S RIBOSOMAL PROTEIN S21"/>
    <property type="match status" value="1"/>
</dbReference>
<dbReference type="PANTHER" id="PTHR21109:SF22">
    <property type="entry name" value="SMALL RIBOSOMAL SUBUNIT PROTEIN BS21"/>
    <property type="match status" value="1"/>
</dbReference>
<dbReference type="Pfam" id="PF01165">
    <property type="entry name" value="Ribosomal_S21"/>
    <property type="match status" value="1"/>
</dbReference>
<dbReference type="PRINTS" id="PR00976">
    <property type="entry name" value="RIBOSOMALS21"/>
</dbReference>
<dbReference type="PROSITE" id="PS01181">
    <property type="entry name" value="RIBOSOMAL_S21"/>
    <property type="match status" value="1"/>
</dbReference>
<accession>P66520</accession>
<accession>Q99TS1</accession>
<feature type="chain" id="PRO_0000178374" description="Small ribosomal subunit protein bS21">
    <location>
        <begin position="1"/>
        <end position="58"/>
    </location>
</feature>
<reference key="1">
    <citation type="journal article" date="2001" name="Lancet">
        <title>Whole genome sequencing of meticillin-resistant Staphylococcus aureus.</title>
        <authorList>
            <person name="Kuroda M."/>
            <person name="Ohta T."/>
            <person name="Uchiyama I."/>
            <person name="Baba T."/>
            <person name="Yuzawa H."/>
            <person name="Kobayashi I."/>
            <person name="Cui L."/>
            <person name="Oguchi A."/>
            <person name="Aoki K."/>
            <person name="Nagai Y."/>
            <person name="Lian J.-Q."/>
            <person name="Ito T."/>
            <person name="Kanamori M."/>
            <person name="Matsumaru H."/>
            <person name="Maruyama A."/>
            <person name="Murakami H."/>
            <person name="Hosoyama A."/>
            <person name="Mizutani-Ui Y."/>
            <person name="Takahashi N.K."/>
            <person name="Sawano T."/>
            <person name="Inoue R."/>
            <person name="Kaito C."/>
            <person name="Sekimizu K."/>
            <person name="Hirakawa H."/>
            <person name="Kuhara S."/>
            <person name="Goto S."/>
            <person name="Yabuzaki J."/>
            <person name="Kanehisa M."/>
            <person name="Yamashita A."/>
            <person name="Oshima K."/>
            <person name="Furuya K."/>
            <person name="Yoshino C."/>
            <person name="Shiba T."/>
            <person name="Hattori M."/>
            <person name="Ogasawara N."/>
            <person name="Hayashi H."/>
            <person name="Hiramatsu K."/>
        </authorList>
    </citation>
    <scope>NUCLEOTIDE SEQUENCE [LARGE SCALE GENOMIC DNA]</scope>
    <source>
        <strain>Mu50 / ATCC 700699</strain>
    </source>
</reference>
<keyword id="KW-0687">Ribonucleoprotein</keyword>
<keyword id="KW-0689">Ribosomal protein</keyword>